<evidence type="ECO:0000269" key="1">
    <source>
    </source>
</evidence>
<evidence type="ECO:0000305" key="2"/>
<dbReference type="EC" id="1.1.1.48"/>
<dbReference type="EMBL" id="X14913">
    <property type="protein sequence ID" value="CAA33038.1"/>
    <property type="molecule type" value="Genomic_DNA"/>
</dbReference>
<dbReference type="PIR" id="S04853">
    <property type="entry name" value="S04853"/>
</dbReference>
<dbReference type="SMR" id="P11886"/>
<dbReference type="KEGG" id="ag:CAA33038"/>
<dbReference type="BioCyc" id="MetaCyc:MONOMER-12890"/>
<dbReference type="UniPathway" id="UPA00214"/>
<dbReference type="GO" id="GO:0005737">
    <property type="term" value="C:cytoplasm"/>
    <property type="evidence" value="ECO:0007669"/>
    <property type="project" value="UniProtKB-SubCell"/>
</dbReference>
<dbReference type="GO" id="GO:0019151">
    <property type="term" value="F:galactose 1-dehydrogenase activity"/>
    <property type="evidence" value="ECO:0007669"/>
    <property type="project" value="UniProtKB-EC"/>
</dbReference>
<dbReference type="GO" id="GO:0000166">
    <property type="term" value="F:nucleotide binding"/>
    <property type="evidence" value="ECO:0007669"/>
    <property type="project" value="InterPro"/>
</dbReference>
<dbReference type="GO" id="GO:0006012">
    <property type="term" value="P:galactose metabolic process"/>
    <property type="evidence" value="ECO:0007669"/>
    <property type="project" value="UniProtKB-UniPathway"/>
</dbReference>
<dbReference type="FunFam" id="3.30.360.10:FF:000035">
    <property type="entry name" value="Galactose 1-dehydrogenase"/>
    <property type="match status" value="1"/>
</dbReference>
<dbReference type="Gene3D" id="3.30.360.10">
    <property type="entry name" value="Dihydrodipicolinate Reductase, domain 2"/>
    <property type="match status" value="1"/>
</dbReference>
<dbReference type="Gene3D" id="3.40.50.720">
    <property type="entry name" value="NAD(P)-binding Rossmann-like Domain"/>
    <property type="match status" value="1"/>
</dbReference>
<dbReference type="InterPro" id="IPR000683">
    <property type="entry name" value="Gfo/Idh/MocA-like_OxRdtase_N"/>
</dbReference>
<dbReference type="InterPro" id="IPR051317">
    <property type="entry name" value="Gfo/Idh/MocA_oxidoreduct"/>
</dbReference>
<dbReference type="InterPro" id="IPR036291">
    <property type="entry name" value="NAD(P)-bd_dom_sf"/>
</dbReference>
<dbReference type="PANTHER" id="PTHR43708">
    <property type="entry name" value="CONSERVED EXPRESSED OXIDOREDUCTASE (EUROFUNG)"/>
    <property type="match status" value="1"/>
</dbReference>
<dbReference type="PANTHER" id="PTHR43708:SF5">
    <property type="entry name" value="CONSERVED EXPRESSED OXIDOREDUCTASE (EUROFUNG)-RELATED"/>
    <property type="match status" value="1"/>
</dbReference>
<dbReference type="Pfam" id="PF01408">
    <property type="entry name" value="GFO_IDH_MocA"/>
    <property type="match status" value="1"/>
</dbReference>
<dbReference type="SUPFAM" id="SSF51735">
    <property type="entry name" value="NAD(P)-binding Rossmann-fold domains"/>
    <property type="match status" value="1"/>
</dbReference>
<feature type="chain" id="PRO_0000087428" description="Galactose 1-dehydrogenase">
    <location>
        <begin position="1"/>
        <end position="304"/>
    </location>
</feature>
<gene>
    <name type="primary">gal</name>
</gene>
<sequence>MQPIRLGLVGYGKIAQDQHVPAINANPAFTLVSVATQGKPCPGVENFQSLGELLENGPPVDAIAFCTPPQGRFALVQQALAAGKHVLVEKPPCATLGKAALWIKREQASAPCSPCIAYAPAIAAARDWLATRTLQSVQIDWKEDVRKWHPGQAWIWQPGLGVFDPGINALSIVTHLLPLPLFVESAELRVPSNCQSPIAASIKMSDPRLLDVRAEFDFDHGHDELWSIQIRCAEGTLRLDNGGALLSIDGVRQTVAEEGEYAAVYRHFQQLIGDKTSDVDVQPLRLVADSFFVGSRVSVEAFYD</sequence>
<protein>
    <recommendedName>
        <fullName>Galactose 1-dehydrogenase</fullName>
        <ecNumber>1.1.1.48</ecNumber>
    </recommendedName>
</protein>
<keyword id="KW-0119">Carbohydrate metabolism</keyword>
<keyword id="KW-0963">Cytoplasm</keyword>
<keyword id="KW-0903">Direct protein sequencing</keyword>
<keyword id="KW-0299">Galactose metabolism</keyword>
<keyword id="KW-0520">NAD</keyword>
<keyword id="KW-0560">Oxidoreductase</keyword>
<name>GAL_PSEFL</name>
<accession>P11886</accession>
<organism>
    <name type="scientific">Pseudomonas fluorescens</name>
    <dbReference type="NCBI Taxonomy" id="294"/>
    <lineage>
        <taxon>Bacteria</taxon>
        <taxon>Pseudomonadati</taxon>
        <taxon>Pseudomonadota</taxon>
        <taxon>Gammaproteobacteria</taxon>
        <taxon>Pseudomonadales</taxon>
        <taxon>Pseudomonadaceae</taxon>
        <taxon>Pseudomonas</taxon>
    </lineage>
</organism>
<reference key="1">
    <citation type="journal article" date="1989" name="Nucleic Acids Res.">
        <title>Complete nucleotide sequence of Pseudomonas fluorescens D-galactose dehydrogenase gene.</title>
        <authorList>
            <person name="Sperka S."/>
            <person name="Zehelein E."/>
            <person name="Fiedler S."/>
            <person name="Fischer S."/>
            <person name="Sommer R."/>
            <person name="Buckel P."/>
        </authorList>
    </citation>
    <scope>NUCLEOTIDE SEQUENCE [GENOMIC DNA]</scope>
    <scope>PROTEIN SEQUENCE OF 1-40</scope>
    <source>
        <strain>BMTU 102</strain>
    </source>
</reference>
<reference key="2">
    <citation type="journal article" date="1974" name="Eur. J. Biochem.">
        <title>D-Galactose dehydrogenase from Pseudomonas fluorescens. Purification, properties and structure.</title>
        <authorList>
            <person name="Blachnitzky E.O."/>
            <person name="Wengenmayer F."/>
            <person name="Kurz G."/>
        </authorList>
    </citation>
    <scope>CATALYTIC ACTIVITY</scope>
    <scope>FUNCTION</scope>
    <scope>SUBUNIT</scope>
    <scope>BIOPHYSICOCHEMICAL PROPERTIES</scope>
</reference>
<proteinExistence type="evidence at protein level"/>
<comment type="function">
    <text evidence="1">Catalyzes the dehydrogenation of D-galactose by either NAD(+) or NADP(+). Oxidizes following sugars in decreasing order: D-fucose &gt; D-galactose &gt; L-arabinose &gt; 2-deoxy-D-galactose &gt;&gt; 4-deoxy-D-galactose &gt; 2-deoxy-2-amino-D-galactose.</text>
</comment>
<comment type="catalytic activity">
    <reaction evidence="1">
        <text>D-galactose + NAD(+) = D-galactono-1,4-lactone + NADH + H(+)</text>
        <dbReference type="Rhea" id="RHEA:21296"/>
        <dbReference type="ChEBI" id="CHEBI:4139"/>
        <dbReference type="ChEBI" id="CHEBI:15378"/>
        <dbReference type="ChEBI" id="CHEBI:15895"/>
        <dbReference type="ChEBI" id="CHEBI:57540"/>
        <dbReference type="ChEBI" id="CHEBI:57945"/>
        <dbReference type="EC" id="1.1.1.48"/>
    </reaction>
</comment>
<comment type="biophysicochemical properties">
    <kinetics>
        <KM evidence="1">0.24 mM for NAD(+)</KM>
        <KM evidence="1">2.3 mM for NADP(+)</KM>
        <KM evidence="1">0.7 mM for D-galactose</KM>
    </kinetics>
    <phDependence>
        <text evidence="1">Optimum pH is between 9.1 and 9.5.</text>
    </phDependence>
</comment>
<comment type="pathway">
    <text>Carbohydrate metabolism; galactose metabolism.</text>
</comment>
<comment type="subunit">
    <text evidence="1">Homodimer.</text>
</comment>
<comment type="subcellular location">
    <subcellularLocation>
        <location>Cytoplasm</location>
    </subcellularLocation>
</comment>
<comment type="similarity">
    <text evidence="2">Belongs to the Gfo/Idh/MocA family.</text>
</comment>